<reference key="1">
    <citation type="submission" date="2008-04" db="EMBL/GenBank/DDBJ databases">
        <title>Complete sequence of Yersinia pseudotuberculosis PB1/+.</title>
        <authorList>
            <person name="Copeland A."/>
            <person name="Lucas S."/>
            <person name="Lapidus A."/>
            <person name="Glavina del Rio T."/>
            <person name="Dalin E."/>
            <person name="Tice H."/>
            <person name="Bruce D."/>
            <person name="Goodwin L."/>
            <person name="Pitluck S."/>
            <person name="Munk A.C."/>
            <person name="Brettin T."/>
            <person name="Detter J.C."/>
            <person name="Han C."/>
            <person name="Tapia R."/>
            <person name="Schmutz J."/>
            <person name="Larimer F."/>
            <person name="Land M."/>
            <person name="Hauser L."/>
            <person name="Challacombe J.F."/>
            <person name="Green L."/>
            <person name="Lindler L.E."/>
            <person name="Nikolich M.P."/>
            <person name="Richardson P."/>
        </authorList>
    </citation>
    <scope>NUCLEOTIDE SEQUENCE [LARGE SCALE GENOMIC DNA]</scope>
    <source>
        <strain>PB1/+</strain>
    </source>
</reference>
<proteinExistence type="inferred from homology"/>
<evidence type="ECO:0000255" key="1">
    <source>
        <dbReference type="HAMAP-Rule" id="MF_00268"/>
    </source>
</evidence>
<feature type="chain" id="PRO_1000114386" description="Protein RecA">
    <location>
        <begin position="1"/>
        <end position="356"/>
    </location>
</feature>
<feature type="binding site" evidence="1">
    <location>
        <begin position="67"/>
        <end position="74"/>
    </location>
    <ligand>
        <name>ATP</name>
        <dbReference type="ChEBI" id="CHEBI:30616"/>
    </ligand>
</feature>
<sequence>MAIDENKQKALAAALGQIEKQFGKGSIMRLGEDRSMDVETISTGSLSLDIALGAGGLPMGRIVEIYGPESSGKTTLTLQVIAAAQREGKTCAFIDAEHALDPIYAKKLGVDIDNLLCSQPDTGEQALEICDALTRSGAVDVIIVDSVAALTPKAEIEGEIGDSHMGLAARMMSQAMRKLAGNLKNANTLLIFINQIRMKIGVMFGNPETTTGGNALKFYASVRLDIRRIGAVKDGDVVVGSETRVKVVKNKIAAPFKQAEFQILYGEGININGELVDLGVKHKLIEKAGAWYSYNGDKIGQGKANASNYLKENPAIAAELDKKLREMLLNGGNGEQPVAAATAEFADGVDETNEEF</sequence>
<keyword id="KW-0067">ATP-binding</keyword>
<keyword id="KW-0963">Cytoplasm</keyword>
<keyword id="KW-0227">DNA damage</keyword>
<keyword id="KW-0233">DNA recombination</keyword>
<keyword id="KW-0234">DNA repair</keyword>
<keyword id="KW-0238">DNA-binding</keyword>
<keyword id="KW-0547">Nucleotide-binding</keyword>
<keyword id="KW-0742">SOS response</keyword>
<name>RECA_YERPB</name>
<comment type="function">
    <text evidence="1">Can catalyze the hydrolysis of ATP in the presence of single-stranded DNA, the ATP-dependent uptake of single-stranded DNA by duplex DNA, and the ATP-dependent hybridization of homologous single-stranded DNAs. It interacts with LexA causing its activation and leading to its autocatalytic cleavage.</text>
</comment>
<comment type="subcellular location">
    <subcellularLocation>
        <location evidence="1">Cytoplasm</location>
    </subcellularLocation>
</comment>
<comment type="similarity">
    <text evidence="1">Belongs to the RecA family.</text>
</comment>
<gene>
    <name evidence="1" type="primary">recA</name>
    <name type="ordered locus">YPTS_0859</name>
</gene>
<dbReference type="EMBL" id="CP001048">
    <property type="protein sequence ID" value="ACC87843.1"/>
    <property type="molecule type" value="Genomic_DNA"/>
</dbReference>
<dbReference type="RefSeq" id="WP_011191806.1">
    <property type="nucleotide sequence ID" value="NZ_CP009780.1"/>
</dbReference>
<dbReference type="SMR" id="B2K5X7"/>
<dbReference type="GeneID" id="49787170"/>
<dbReference type="KEGG" id="ypb:YPTS_0859"/>
<dbReference type="PATRIC" id="fig|502801.10.peg.192"/>
<dbReference type="GO" id="GO:0005829">
    <property type="term" value="C:cytosol"/>
    <property type="evidence" value="ECO:0007669"/>
    <property type="project" value="TreeGrafter"/>
</dbReference>
<dbReference type="GO" id="GO:0005524">
    <property type="term" value="F:ATP binding"/>
    <property type="evidence" value="ECO:0007669"/>
    <property type="project" value="UniProtKB-UniRule"/>
</dbReference>
<dbReference type="GO" id="GO:0016887">
    <property type="term" value="F:ATP hydrolysis activity"/>
    <property type="evidence" value="ECO:0007669"/>
    <property type="project" value="InterPro"/>
</dbReference>
<dbReference type="GO" id="GO:0140664">
    <property type="term" value="F:ATP-dependent DNA damage sensor activity"/>
    <property type="evidence" value="ECO:0007669"/>
    <property type="project" value="InterPro"/>
</dbReference>
<dbReference type="GO" id="GO:0003684">
    <property type="term" value="F:damaged DNA binding"/>
    <property type="evidence" value="ECO:0007669"/>
    <property type="project" value="UniProtKB-UniRule"/>
</dbReference>
<dbReference type="GO" id="GO:0003697">
    <property type="term" value="F:single-stranded DNA binding"/>
    <property type="evidence" value="ECO:0007669"/>
    <property type="project" value="UniProtKB-UniRule"/>
</dbReference>
<dbReference type="GO" id="GO:0006310">
    <property type="term" value="P:DNA recombination"/>
    <property type="evidence" value="ECO:0007669"/>
    <property type="project" value="UniProtKB-UniRule"/>
</dbReference>
<dbReference type="GO" id="GO:0006281">
    <property type="term" value="P:DNA repair"/>
    <property type="evidence" value="ECO:0007669"/>
    <property type="project" value="UniProtKB-UniRule"/>
</dbReference>
<dbReference type="GO" id="GO:0009432">
    <property type="term" value="P:SOS response"/>
    <property type="evidence" value="ECO:0007669"/>
    <property type="project" value="UniProtKB-UniRule"/>
</dbReference>
<dbReference type="CDD" id="cd00983">
    <property type="entry name" value="RecA"/>
    <property type="match status" value="1"/>
</dbReference>
<dbReference type="FunFam" id="3.40.50.300:FF:000087">
    <property type="entry name" value="Recombinase RecA"/>
    <property type="match status" value="1"/>
</dbReference>
<dbReference type="Gene3D" id="3.40.50.300">
    <property type="entry name" value="P-loop containing nucleotide triphosphate hydrolases"/>
    <property type="match status" value="1"/>
</dbReference>
<dbReference type="HAMAP" id="MF_00268">
    <property type="entry name" value="RecA"/>
    <property type="match status" value="1"/>
</dbReference>
<dbReference type="InterPro" id="IPR003593">
    <property type="entry name" value="AAA+_ATPase"/>
</dbReference>
<dbReference type="InterPro" id="IPR013765">
    <property type="entry name" value="DNA_recomb/repair_RecA"/>
</dbReference>
<dbReference type="InterPro" id="IPR020584">
    <property type="entry name" value="DNA_recomb/repair_RecA_CS"/>
</dbReference>
<dbReference type="InterPro" id="IPR027417">
    <property type="entry name" value="P-loop_NTPase"/>
</dbReference>
<dbReference type="InterPro" id="IPR049261">
    <property type="entry name" value="RecA-like_C"/>
</dbReference>
<dbReference type="InterPro" id="IPR049428">
    <property type="entry name" value="RecA-like_N"/>
</dbReference>
<dbReference type="InterPro" id="IPR020588">
    <property type="entry name" value="RecA_ATP-bd"/>
</dbReference>
<dbReference type="InterPro" id="IPR023400">
    <property type="entry name" value="RecA_C_sf"/>
</dbReference>
<dbReference type="InterPro" id="IPR020587">
    <property type="entry name" value="RecA_monomer-monomer_interface"/>
</dbReference>
<dbReference type="NCBIfam" id="TIGR02012">
    <property type="entry name" value="tigrfam_recA"/>
    <property type="match status" value="1"/>
</dbReference>
<dbReference type="PANTHER" id="PTHR45900:SF1">
    <property type="entry name" value="MITOCHONDRIAL DNA REPAIR PROTEIN RECA HOMOLOG-RELATED"/>
    <property type="match status" value="1"/>
</dbReference>
<dbReference type="PANTHER" id="PTHR45900">
    <property type="entry name" value="RECA"/>
    <property type="match status" value="1"/>
</dbReference>
<dbReference type="Pfam" id="PF00154">
    <property type="entry name" value="RecA"/>
    <property type="match status" value="1"/>
</dbReference>
<dbReference type="Pfam" id="PF21096">
    <property type="entry name" value="RecA_C"/>
    <property type="match status" value="1"/>
</dbReference>
<dbReference type="PRINTS" id="PR00142">
    <property type="entry name" value="RECA"/>
</dbReference>
<dbReference type="SMART" id="SM00382">
    <property type="entry name" value="AAA"/>
    <property type="match status" value="1"/>
</dbReference>
<dbReference type="SUPFAM" id="SSF52540">
    <property type="entry name" value="P-loop containing nucleoside triphosphate hydrolases"/>
    <property type="match status" value="1"/>
</dbReference>
<dbReference type="SUPFAM" id="SSF54752">
    <property type="entry name" value="RecA protein, C-terminal domain"/>
    <property type="match status" value="1"/>
</dbReference>
<dbReference type="PROSITE" id="PS00321">
    <property type="entry name" value="RECA_1"/>
    <property type="match status" value="1"/>
</dbReference>
<dbReference type="PROSITE" id="PS50162">
    <property type="entry name" value="RECA_2"/>
    <property type="match status" value="1"/>
</dbReference>
<dbReference type="PROSITE" id="PS50163">
    <property type="entry name" value="RECA_3"/>
    <property type="match status" value="1"/>
</dbReference>
<organism>
    <name type="scientific">Yersinia pseudotuberculosis serotype IB (strain PB1/+)</name>
    <dbReference type="NCBI Taxonomy" id="502801"/>
    <lineage>
        <taxon>Bacteria</taxon>
        <taxon>Pseudomonadati</taxon>
        <taxon>Pseudomonadota</taxon>
        <taxon>Gammaproteobacteria</taxon>
        <taxon>Enterobacterales</taxon>
        <taxon>Yersiniaceae</taxon>
        <taxon>Yersinia</taxon>
    </lineage>
</organism>
<protein>
    <recommendedName>
        <fullName evidence="1">Protein RecA</fullName>
    </recommendedName>
    <alternativeName>
        <fullName evidence="1">Recombinase A</fullName>
    </alternativeName>
</protein>
<accession>B2K5X7</accession>